<evidence type="ECO:0000255" key="1">
    <source>
        <dbReference type="HAMAP-Rule" id="MF_00285"/>
    </source>
</evidence>
<dbReference type="EC" id="7.2.2.6" evidence="1"/>
<dbReference type="EMBL" id="LT708304">
    <property type="protein sequence ID" value="SIT99658.1"/>
    <property type="molecule type" value="Genomic_DNA"/>
</dbReference>
<dbReference type="RefSeq" id="NP_854715.1">
    <property type="nucleotide sequence ID" value="NC_002945.3"/>
</dbReference>
<dbReference type="RefSeq" id="WP_003405320.1">
    <property type="nucleotide sequence ID" value="NC_002945.4"/>
</dbReference>
<dbReference type="SMR" id="P63682"/>
<dbReference type="KEGG" id="mbo:BQ2027_MB1059"/>
<dbReference type="PATRIC" id="fig|233413.5.peg.1152"/>
<dbReference type="Proteomes" id="UP000001419">
    <property type="component" value="Chromosome"/>
</dbReference>
<dbReference type="GO" id="GO:0005886">
    <property type="term" value="C:plasma membrane"/>
    <property type="evidence" value="ECO:0007669"/>
    <property type="project" value="UniProtKB-SubCell"/>
</dbReference>
<dbReference type="GO" id="GO:0005524">
    <property type="term" value="F:ATP binding"/>
    <property type="evidence" value="ECO:0007669"/>
    <property type="project" value="UniProtKB-UniRule"/>
</dbReference>
<dbReference type="GO" id="GO:0016887">
    <property type="term" value="F:ATP hydrolysis activity"/>
    <property type="evidence" value="ECO:0007669"/>
    <property type="project" value="InterPro"/>
</dbReference>
<dbReference type="GO" id="GO:0000287">
    <property type="term" value="F:magnesium ion binding"/>
    <property type="evidence" value="ECO:0007669"/>
    <property type="project" value="UniProtKB-UniRule"/>
</dbReference>
<dbReference type="GO" id="GO:0008556">
    <property type="term" value="F:P-type potassium transmembrane transporter activity"/>
    <property type="evidence" value="ECO:0007669"/>
    <property type="project" value="UniProtKB-UniRule"/>
</dbReference>
<dbReference type="CDD" id="cd02078">
    <property type="entry name" value="P-type_ATPase_K"/>
    <property type="match status" value="1"/>
</dbReference>
<dbReference type="FunFam" id="2.70.150.10:FF:000033">
    <property type="entry name" value="Potassium-transporting ATPase ATP-binding subunit"/>
    <property type="match status" value="1"/>
</dbReference>
<dbReference type="FunFam" id="3.40.1110.10:FF:000007">
    <property type="entry name" value="Potassium-transporting ATPase ATP-binding subunit"/>
    <property type="match status" value="1"/>
</dbReference>
<dbReference type="Gene3D" id="3.40.1110.10">
    <property type="entry name" value="Calcium-transporting ATPase, cytoplasmic domain N"/>
    <property type="match status" value="1"/>
</dbReference>
<dbReference type="Gene3D" id="2.70.150.10">
    <property type="entry name" value="Calcium-transporting ATPase, cytoplasmic transduction domain A"/>
    <property type="match status" value="1"/>
</dbReference>
<dbReference type="Gene3D" id="3.40.50.1000">
    <property type="entry name" value="HAD superfamily/HAD-like"/>
    <property type="match status" value="1"/>
</dbReference>
<dbReference type="HAMAP" id="MF_00285">
    <property type="entry name" value="KdpB"/>
    <property type="match status" value="1"/>
</dbReference>
<dbReference type="InterPro" id="IPR023299">
    <property type="entry name" value="ATPase_P-typ_cyto_dom_N"/>
</dbReference>
<dbReference type="InterPro" id="IPR018303">
    <property type="entry name" value="ATPase_P-typ_P_site"/>
</dbReference>
<dbReference type="InterPro" id="IPR023298">
    <property type="entry name" value="ATPase_P-typ_TM_dom_sf"/>
</dbReference>
<dbReference type="InterPro" id="IPR008250">
    <property type="entry name" value="ATPase_P-typ_transduc_dom_A_sf"/>
</dbReference>
<dbReference type="InterPro" id="IPR036412">
    <property type="entry name" value="HAD-like_sf"/>
</dbReference>
<dbReference type="InterPro" id="IPR023214">
    <property type="entry name" value="HAD_sf"/>
</dbReference>
<dbReference type="InterPro" id="IPR006391">
    <property type="entry name" value="P-type_ATPase_bsu_IA"/>
</dbReference>
<dbReference type="InterPro" id="IPR001757">
    <property type="entry name" value="P_typ_ATPase"/>
</dbReference>
<dbReference type="InterPro" id="IPR044492">
    <property type="entry name" value="P_typ_ATPase_HD_dom"/>
</dbReference>
<dbReference type="NCBIfam" id="TIGR01494">
    <property type="entry name" value="ATPase_P-type"/>
    <property type="match status" value="2"/>
</dbReference>
<dbReference type="NCBIfam" id="TIGR01497">
    <property type="entry name" value="kdpB"/>
    <property type="match status" value="1"/>
</dbReference>
<dbReference type="PANTHER" id="PTHR43743">
    <property type="entry name" value="POTASSIUM-TRANSPORTING ATPASE ATP-BINDING SUBUNIT"/>
    <property type="match status" value="1"/>
</dbReference>
<dbReference type="PANTHER" id="PTHR43743:SF1">
    <property type="entry name" value="POTASSIUM-TRANSPORTING ATPASE ATP-BINDING SUBUNIT"/>
    <property type="match status" value="1"/>
</dbReference>
<dbReference type="Pfam" id="PF00122">
    <property type="entry name" value="E1-E2_ATPase"/>
    <property type="match status" value="1"/>
</dbReference>
<dbReference type="Pfam" id="PF00702">
    <property type="entry name" value="Hydrolase"/>
    <property type="match status" value="1"/>
</dbReference>
<dbReference type="PRINTS" id="PR00119">
    <property type="entry name" value="CATATPASE"/>
</dbReference>
<dbReference type="SFLD" id="SFLDS00003">
    <property type="entry name" value="Haloacid_Dehalogenase"/>
    <property type="match status" value="1"/>
</dbReference>
<dbReference type="SFLD" id="SFLDF00027">
    <property type="entry name" value="p-type_atpase"/>
    <property type="match status" value="1"/>
</dbReference>
<dbReference type="SUPFAM" id="SSF81653">
    <property type="entry name" value="Calcium ATPase, transduction domain A"/>
    <property type="match status" value="1"/>
</dbReference>
<dbReference type="SUPFAM" id="SSF81665">
    <property type="entry name" value="Calcium ATPase, transmembrane domain M"/>
    <property type="match status" value="1"/>
</dbReference>
<dbReference type="SUPFAM" id="SSF56784">
    <property type="entry name" value="HAD-like"/>
    <property type="match status" value="1"/>
</dbReference>
<dbReference type="PROSITE" id="PS00154">
    <property type="entry name" value="ATPASE_E1_E2"/>
    <property type="match status" value="1"/>
</dbReference>
<organism>
    <name type="scientific">Mycobacterium bovis (strain ATCC BAA-935 / AF2122/97)</name>
    <dbReference type="NCBI Taxonomy" id="233413"/>
    <lineage>
        <taxon>Bacteria</taxon>
        <taxon>Bacillati</taxon>
        <taxon>Actinomycetota</taxon>
        <taxon>Actinomycetes</taxon>
        <taxon>Mycobacteriales</taxon>
        <taxon>Mycobacteriaceae</taxon>
        <taxon>Mycobacterium</taxon>
        <taxon>Mycobacterium tuberculosis complex</taxon>
    </lineage>
</organism>
<name>KDPB_MYCBO</name>
<reference key="1">
    <citation type="journal article" date="2003" name="Proc. Natl. Acad. Sci. U.S.A.">
        <title>The complete genome sequence of Mycobacterium bovis.</title>
        <authorList>
            <person name="Garnier T."/>
            <person name="Eiglmeier K."/>
            <person name="Camus J.-C."/>
            <person name="Medina N."/>
            <person name="Mansoor H."/>
            <person name="Pryor M."/>
            <person name="Duthoy S."/>
            <person name="Grondin S."/>
            <person name="Lacroix C."/>
            <person name="Monsempe C."/>
            <person name="Simon S."/>
            <person name="Harris B."/>
            <person name="Atkin R."/>
            <person name="Doggett J."/>
            <person name="Mayes R."/>
            <person name="Keating L."/>
            <person name="Wheeler P.R."/>
            <person name="Parkhill J."/>
            <person name="Barrell B.G."/>
            <person name="Cole S.T."/>
            <person name="Gordon S.V."/>
            <person name="Hewinson R.G."/>
        </authorList>
    </citation>
    <scope>NUCLEOTIDE SEQUENCE [LARGE SCALE GENOMIC DNA]</scope>
    <source>
        <strain>ATCC BAA-935 / AF2122/97</strain>
    </source>
</reference>
<reference key="2">
    <citation type="journal article" date="2017" name="Genome Announc.">
        <title>Updated reference genome sequence and annotation of Mycobacterium bovis AF2122/97.</title>
        <authorList>
            <person name="Malone K.M."/>
            <person name="Farrell D."/>
            <person name="Stuber T.P."/>
            <person name="Schubert O.T."/>
            <person name="Aebersold R."/>
            <person name="Robbe-Austerman S."/>
            <person name="Gordon S.V."/>
        </authorList>
    </citation>
    <scope>NUCLEOTIDE SEQUENCE [LARGE SCALE GENOMIC DNA]</scope>
    <scope>GENOME REANNOTATION</scope>
    <source>
        <strain>ATCC BAA-935 / AF2122/97</strain>
    </source>
</reference>
<proteinExistence type="inferred from homology"/>
<comment type="function">
    <text evidence="1">Part of the high-affinity ATP-driven potassium transport (or Kdp) system, which catalyzes the hydrolysis of ATP coupled with the electrogenic transport of potassium into the cytoplasm. This subunit is responsible for energy coupling to the transport system and for the release of the potassium ions to the cytoplasm.</text>
</comment>
<comment type="catalytic activity">
    <reaction evidence="1">
        <text>K(+)(out) + ATP + H2O = K(+)(in) + ADP + phosphate + H(+)</text>
        <dbReference type="Rhea" id="RHEA:16777"/>
        <dbReference type="ChEBI" id="CHEBI:15377"/>
        <dbReference type="ChEBI" id="CHEBI:15378"/>
        <dbReference type="ChEBI" id="CHEBI:29103"/>
        <dbReference type="ChEBI" id="CHEBI:30616"/>
        <dbReference type="ChEBI" id="CHEBI:43474"/>
        <dbReference type="ChEBI" id="CHEBI:456216"/>
        <dbReference type="EC" id="7.2.2.6"/>
    </reaction>
    <physiologicalReaction direction="left-to-right" evidence="1">
        <dbReference type="Rhea" id="RHEA:16778"/>
    </physiologicalReaction>
</comment>
<comment type="subunit">
    <text evidence="1">The system is composed of three essential subunits: KdpA, KdpB and KdpC.</text>
</comment>
<comment type="subcellular location">
    <subcellularLocation>
        <location evidence="1">Cell membrane</location>
        <topology evidence="1">Multi-pass membrane protein</topology>
    </subcellularLocation>
</comment>
<comment type="similarity">
    <text evidence="1">Belongs to the cation transport ATPase (P-type) (TC 3.A.3) family. Type IA subfamily.</text>
</comment>
<feature type="chain" id="PRO_0000046125" description="Potassium-transporting ATPase ATP-binding subunit">
    <location>
        <begin position="1"/>
        <end position="709"/>
    </location>
</feature>
<feature type="transmembrane region" description="Helical" evidence="1">
    <location>
        <begin position="55"/>
        <end position="75"/>
    </location>
</feature>
<feature type="transmembrane region" description="Helical" evidence="1">
    <location>
        <begin position="86"/>
        <end position="106"/>
    </location>
</feature>
<feature type="transmembrane region" description="Helical" evidence="1">
    <location>
        <begin position="236"/>
        <end position="256"/>
    </location>
</feature>
<feature type="transmembrane region" description="Helical" evidence="1">
    <location>
        <begin position="269"/>
        <end position="289"/>
    </location>
</feature>
<feature type="transmembrane region" description="Helical" evidence="1">
    <location>
        <begin position="615"/>
        <end position="635"/>
    </location>
</feature>
<feature type="transmembrane region" description="Helical" evidence="1">
    <location>
        <begin position="643"/>
        <end position="663"/>
    </location>
</feature>
<feature type="transmembrane region" description="Helical" evidence="1">
    <location>
        <begin position="688"/>
        <end position="708"/>
    </location>
</feature>
<feature type="active site" description="4-aspartylphosphate intermediate" evidence="1">
    <location>
        <position position="324"/>
    </location>
</feature>
<feature type="binding site" evidence="1">
    <location>
        <position position="361"/>
    </location>
    <ligand>
        <name>ATP</name>
        <dbReference type="ChEBI" id="CHEBI:30616"/>
    </ligand>
</feature>
<feature type="binding site" evidence="1">
    <location>
        <position position="365"/>
    </location>
    <ligand>
        <name>ATP</name>
        <dbReference type="ChEBI" id="CHEBI:30616"/>
    </ligand>
</feature>
<feature type="binding site" evidence="1">
    <location>
        <begin position="395"/>
        <end position="402"/>
    </location>
    <ligand>
        <name>ATP</name>
        <dbReference type="ChEBI" id="CHEBI:30616"/>
    </ligand>
</feature>
<feature type="binding site" evidence="1">
    <location>
        <position position="417"/>
    </location>
    <ligand>
        <name>ATP</name>
        <dbReference type="ChEBI" id="CHEBI:30616"/>
    </ligand>
</feature>
<feature type="binding site" evidence="1">
    <location>
        <position position="545"/>
    </location>
    <ligand>
        <name>Mg(2+)</name>
        <dbReference type="ChEBI" id="CHEBI:18420"/>
    </ligand>
</feature>
<feature type="binding site" evidence="1">
    <location>
        <position position="549"/>
    </location>
    <ligand>
        <name>Mg(2+)</name>
        <dbReference type="ChEBI" id="CHEBI:18420"/>
    </ligand>
</feature>
<keyword id="KW-0067">ATP-binding</keyword>
<keyword id="KW-1003">Cell membrane</keyword>
<keyword id="KW-0406">Ion transport</keyword>
<keyword id="KW-0460">Magnesium</keyword>
<keyword id="KW-0472">Membrane</keyword>
<keyword id="KW-0479">Metal-binding</keyword>
<keyword id="KW-0547">Nucleotide-binding</keyword>
<keyword id="KW-0597">Phosphoprotein</keyword>
<keyword id="KW-0630">Potassium</keyword>
<keyword id="KW-0633">Potassium transport</keyword>
<keyword id="KW-1185">Reference proteome</keyword>
<keyword id="KW-1278">Translocase</keyword>
<keyword id="KW-0812">Transmembrane</keyword>
<keyword id="KW-1133">Transmembrane helix</keyword>
<keyword id="KW-0813">Transport</keyword>
<accession>P63682</accession>
<accession>A0A1R3XX41</accession>
<accession>P96370</accession>
<accession>X2BGX3</accession>
<sequence length="709" mass="74634">MMIARMETSATAAAATSAPRLRLAKRSLFDPMIVRSALPQSLRKLAPRVQARNPVMLVVLVGAVITTLAFLRDLASSTAQENVFNGLVAAFLWFTVLFANFAEAMAEGRGKAQAAALRKVRSETMANRRTAAGNIESVPSSRLDLDDVVEVSAGETIPSDGEIIEGIASVDESAITGESAPVIRESGGDRSAVTGGTVVLSDRIVVRITAKQGQTFIDRMIALVEGAARQQTPNEIALNILLAGLTIIFLLAVVTLQPFAIYSGGGQRVVVLVALLVCLIPTTIGALLSAIGIAGMDRLVQHNVLATSGRAVEAAGDVNTLLLDKTGTITLGNRQATEFVPINGVSAEAVADAAQLSSLADETPEGRSIVVLAKDEFGLRARDEGVMSHARFVPFTAETRMSGVDLAEVSGIRRIRKGAAAAVMKWVRDHGGHPTEEVGAIVDGISSGGGTPLVVAEWTDNSSARAIGVVHLKDIVKVGIRERFDEMRRMSIRTVMITGDNPATAKAIAQEAGVDDFLAEATPEDKLALIKREQQGGRLVAMTGDGTNDAPALAQADVGVAMNTGTQAAREAGNMVDLDSDPTKLIEVVEIGKQLLITRGALTTFSIANDVAKYFAIIPAMFVGLYPVLDKLNVMALHSPRSAILSAVIFNALVIVALIPLALRGVRFRAESASAMLRRNLLIYGLGGLVVPFIGIKLVDLVIVALGVS</sequence>
<protein>
    <recommendedName>
        <fullName evidence="1">Potassium-transporting ATPase ATP-binding subunit</fullName>
        <ecNumber evidence="1">7.2.2.6</ecNumber>
    </recommendedName>
    <alternativeName>
        <fullName evidence="1">ATP phosphohydrolase [potassium-transporting] B chain</fullName>
    </alternativeName>
    <alternativeName>
        <fullName evidence="1">Potassium-binding and translocating subunit B</fullName>
    </alternativeName>
    <alternativeName>
        <fullName evidence="1">Potassium-translocating ATPase B chain</fullName>
    </alternativeName>
</protein>
<gene>
    <name evidence="1" type="primary">kdpB</name>
    <name type="ordered locus">BQ2027_MB1059</name>
</gene>